<evidence type="ECO:0000255" key="1">
    <source>
        <dbReference type="HAMAP-Rule" id="MF_00511"/>
    </source>
</evidence>
<evidence type="ECO:0000305" key="2"/>
<proteinExistence type="inferred from homology"/>
<protein>
    <recommendedName>
        <fullName evidence="1">Small ribosomal subunit protein eS17</fullName>
    </recommendedName>
    <alternativeName>
        <fullName evidence="2">30S ribosomal protein S17e</fullName>
    </alternativeName>
</protein>
<accession>P58503</accession>
<sequence>MGKIRQGFIKRVARELFNKYPNEFTRDFEHNKKKVQELTNVTSKKIRNRIAGYITKLVRMKEEGKIL</sequence>
<name>RS17E_PYRHO</name>
<dbReference type="EMBL" id="BA000001">
    <property type="status" value="NOT_ANNOTATED_CDS"/>
    <property type="molecule type" value="Genomic_DNA"/>
</dbReference>
<dbReference type="RefSeq" id="WP_010885408.1">
    <property type="nucleotide sequence ID" value="NC_000961.1"/>
</dbReference>
<dbReference type="SMR" id="P58503"/>
<dbReference type="GeneID" id="1443645"/>
<dbReference type="OrthoDB" id="52479at2157"/>
<dbReference type="Proteomes" id="UP000000752">
    <property type="component" value="Chromosome"/>
</dbReference>
<dbReference type="GO" id="GO:0005829">
    <property type="term" value="C:cytosol"/>
    <property type="evidence" value="ECO:0007669"/>
    <property type="project" value="UniProtKB-ARBA"/>
</dbReference>
<dbReference type="GO" id="GO:1990904">
    <property type="term" value="C:ribonucleoprotein complex"/>
    <property type="evidence" value="ECO:0007669"/>
    <property type="project" value="UniProtKB-KW"/>
</dbReference>
<dbReference type="GO" id="GO:0005840">
    <property type="term" value="C:ribosome"/>
    <property type="evidence" value="ECO:0007669"/>
    <property type="project" value="UniProtKB-KW"/>
</dbReference>
<dbReference type="GO" id="GO:0003735">
    <property type="term" value="F:structural constituent of ribosome"/>
    <property type="evidence" value="ECO:0007669"/>
    <property type="project" value="InterPro"/>
</dbReference>
<dbReference type="GO" id="GO:0006412">
    <property type="term" value="P:translation"/>
    <property type="evidence" value="ECO:0007669"/>
    <property type="project" value="UniProtKB-UniRule"/>
</dbReference>
<dbReference type="Gene3D" id="1.10.60.20">
    <property type="entry name" value="Ribosomal protein S17e-like"/>
    <property type="match status" value="1"/>
</dbReference>
<dbReference type="HAMAP" id="MF_00511">
    <property type="entry name" value="Ribosomal_eS17"/>
    <property type="match status" value="1"/>
</dbReference>
<dbReference type="InterPro" id="IPR001210">
    <property type="entry name" value="Ribosomal_eS17"/>
</dbReference>
<dbReference type="InterPro" id="IPR018273">
    <property type="entry name" value="Ribosomal_eS17_CS"/>
</dbReference>
<dbReference type="InterPro" id="IPR036401">
    <property type="entry name" value="Ribosomal_eS17_sf"/>
</dbReference>
<dbReference type="NCBIfam" id="NF002242">
    <property type="entry name" value="PRK01151.1"/>
    <property type="match status" value="1"/>
</dbReference>
<dbReference type="PANTHER" id="PTHR10732">
    <property type="entry name" value="40S RIBOSOMAL PROTEIN S17"/>
    <property type="match status" value="1"/>
</dbReference>
<dbReference type="PANTHER" id="PTHR10732:SF0">
    <property type="entry name" value="40S RIBOSOMAL PROTEIN S17"/>
    <property type="match status" value="1"/>
</dbReference>
<dbReference type="Pfam" id="PF00833">
    <property type="entry name" value="Ribosomal_S17e"/>
    <property type="match status" value="1"/>
</dbReference>
<dbReference type="SUPFAM" id="SSF116820">
    <property type="entry name" value="Rps17e-like"/>
    <property type="match status" value="1"/>
</dbReference>
<dbReference type="PROSITE" id="PS00712">
    <property type="entry name" value="RIBOSOMAL_S17E"/>
    <property type="match status" value="1"/>
</dbReference>
<reference key="1">
    <citation type="journal article" date="1998" name="DNA Res.">
        <title>Complete sequence and gene organization of the genome of a hyper-thermophilic archaebacterium, Pyrococcus horikoshii OT3.</title>
        <authorList>
            <person name="Kawarabayasi Y."/>
            <person name="Sawada M."/>
            <person name="Horikawa H."/>
            <person name="Haikawa Y."/>
            <person name="Hino Y."/>
            <person name="Yamamoto S."/>
            <person name="Sekine M."/>
            <person name="Baba S."/>
            <person name="Kosugi H."/>
            <person name="Hosoyama A."/>
            <person name="Nagai Y."/>
            <person name="Sakai M."/>
            <person name="Ogura K."/>
            <person name="Otsuka R."/>
            <person name="Nakazawa H."/>
            <person name="Takamiya M."/>
            <person name="Ohfuku Y."/>
            <person name="Funahashi T."/>
            <person name="Tanaka T."/>
            <person name="Kudoh Y."/>
            <person name="Yamazaki J."/>
            <person name="Kushida N."/>
            <person name="Oguchi A."/>
            <person name="Aoki K."/>
            <person name="Yoshizawa T."/>
            <person name="Nakamura Y."/>
            <person name="Robb F.T."/>
            <person name="Horikoshi K."/>
            <person name="Masuchi Y."/>
            <person name="Shizuya H."/>
            <person name="Kikuchi H."/>
        </authorList>
    </citation>
    <scope>NUCLEOTIDE SEQUENCE [LARGE SCALE GENOMIC DNA]</scope>
    <source>
        <strain>ATCC 700860 / DSM 12428 / JCM 9974 / NBRC 100139 / OT-3</strain>
    </source>
</reference>
<reference key="2">
    <citation type="unpublished observations" date="2001-12">
        <authorList>
            <person name="Medigue C."/>
            <person name="Bocs S."/>
        </authorList>
    </citation>
    <scope>IDENTIFICATION</scope>
</reference>
<keyword id="KW-0687">Ribonucleoprotein</keyword>
<keyword id="KW-0689">Ribosomal protein</keyword>
<feature type="chain" id="PRO_0000141563" description="Small ribosomal subunit protein eS17">
    <location>
        <begin position="1"/>
        <end position="67"/>
    </location>
</feature>
<comment type="similarity">
    <text evidence="1">Belongs to the eukaryotic ribosomal protein eS17 family.</text>
</comment>
<gene>
    <name evidence="1" type="primary">rps17e</name>
    <name type="ordered locus">PH1316.1</name>
</gene>
<organism>
    <name type="scientific">Pyrococcus horikoshii (strain ATCC 700860 / DSM 12428 / JCM 9974 / NBRC 100139 / OT-3)</name>
    <dbReference type="NCBI Taxonomy" id="70601"/>
    <lineage>
        <taxon>Archaea</taxon>
        <taxon>Methanobacteriati</taxon>
        <taxon>Methanobacteriota</taxon>
        <taxon>Thermococci</taxon>
        <taxon>Thermococcales</taxon>
        <taxon>Thermococcaceae</taxon>
        <taxon>Pyrococcus</taxon>
    </lineage>
</organism>